<protein>
    <recommendedName>
        <fullName>Protein HEATR9</fullName>
    </recommendedName>
    <alternativeName>
        <fullName>HEAT repeat-containing protein 9</fullName>
    </alternativeName>
</protein>
<feature type="chain" id="PRO_0000287176" description="Protein HEATR9">
    <location>
        <begin position="1"/>
        <end position="570"/>
    </location>
</feature>
<feature type="splice variant" id="VSP_036493" description="In isoform 4 and isoform 5." evidence="3">
    <location>
        <begin position="1"/>
        <end position="34"/>
    </location>
</feature>
<feature type="splice variant" id="VSP_036494" description="In isoform 3 and isoform 5." evidence="3">
    <location>
        <begin position="112"/>
        <end position="151"/>
    </location>
</feature>
<feature type="splice variant" id="VSP_025349" description="In isoform 2." evidence="4">
    <original>AQTGPEKVKYEAYRTLAILGCLNKHVIRAL</original>
    <variation>VSLRTAGVQERRKQGLRCVACGHRRGSPGC</variation>
    <location>
        <begin position="190"/>
        <end position="219"/>
    </location>
</feature>
<feature type="splice variant" id="VSP_025350" description="In isoform 2." evidence="4">
    <location>
        <begin position="220"/>
        <end position="570"/>
    </location>
</feature>
<feature type="splice variant" id="VSP_036495" description="In isoform 4 and isoform 5." evidence="3">
    <original>QLMNP</original>
    <variation>NKRRK</variation>
    <location>
        <begin position="410"/>
        <end position="414"/>
    </location>
</feature>
<feature type="splice variant" id="VSP_036496" description="In isoform 4 and isoform 5." evidence="3">
    <location>
        <begin position="415"/>
        <end position="570"/>
    </location>
</feature>
<feature type="sequence variant" id="VAR_035685" description="In a breast cancer sample; somatic mutation." evidence="2">
    <original>I</original>
    <variation>M</variation>
    <location>
        <position position="330"/>
    </location>
</feature>
<feature type="sequence variant" id="VAR_032281" description="In dbSNP:rs2306630." evidence="1">
    <original>S</original>
    <variation>F</variation>
    <location>
        <position position="480"/>
    </location>
</feature>
<feature type="sequence conflict" description="In Ref. 3; AAI32682." evidence="5" ref="3">
    <original>Y</original>
    <variation>C</variation>
    <location>
        <position position="3"/>
    </location>
</feature>
<feature type="sequence conflict" description="In Ref. 1; BAB71466." evidence="5" ref="1">
    <original>Q</original>
    <variation>R</variation>
    <location>
        <position position="222"/>
    </location>
</feature>
<feature type="sequence conflict" description="In Ref. 1; BAG63233." evidence="5" ref="1">
    <original>K</original>
    <variation>R</variation>
    <location>
        <position position="400"/>
    </location>
</feature>
<keyword id="KW-0025">Alternative splicing</keyword>
<keyword id="KW-1267">Proteomics identification</keyword>
<keyword id="KW-1185">Reference proteome</keyword>
<comment type="interaction">
    <interactant intactId="EBI-13049042">
        <id>A2RTY3</id>
    </interactant>
    <interactant intactId="EBI-10329202">
        <id>Q9Y5R4</id>
        <label>HEMK1</label>
    </interactant>
    <organismsDiffer>false</organismsDiffer>
    <experiments>3</experiments>
</comment>
<comment type="alternative products">
    <event type="alternative splicing"/>
    <isoform>
        <id>A2RTY3-1</id>
        <name>1</name>
        <sequence type="displayed"/>
    </isoform>
    <isoform>
        <id>A2RTY3-2</id>
        <name>2</name>
        <sequence type="described" ref="VSP_025349 VSP_025350"/>
    </isoform>
    <isoform>
        <id>A2RTY3-3</id>
        <name>3</name>
        <sequence type="described" ref="VSP_036494"/>
    </isoform>
    <isoform>
        <id>A2RTY3-4</id>
        <name>4</name>
        <sequence type="described" ref="VSP_036493 VSP_036495 VSP_036496"/>
    </isoform>
    <isoform>
        <id>A2RTY3-5</id>
        <name>5</name>
        <sequence type="described" ref="VSP_036493 VSP_036494 VSP_036495 VSP_036496"/>
    </isoform>
</comment>
<comment type="caution">
    <text evidence="5">Despite its name, the presence of HEAT repeat is unsure and is not confirmed by repeat-detection programs.</text>
</comment>
<proteinExistence type="evidence at protein level"/>
<evidence type="ECO:0000269" key="1">
    <source>
    </source>
</evidence>
<evidence type="ECO:0000269" key="2">
    <source>
    </source>
</evidence>
<evidence type="ECO:0000303" key="3">
    <source>
    </source>
</evidence>
<evidence type="ECO:0000303" key="4">
    <source>
    </source>
</evidence>
<evidence type="ECO:0000305" key="5"/>
<sequence>MAYEKSTDISDVSRSMFLYPWLEYPDKTKELRKAMAPVHLPLSCYQMPKEEFPPSPECWRQHPSKPNSVPYCYFKKPEIYTHWHDLYDQREEREAEKMLRKMRDDCRYIKEVHQTHIKMFHLPMSKLTIKSEMRSRPLEPTQDPLKWQRLRELTKSLESPREDEQFYAAQALGCLRISDKFVMEALQQVAQTGPEKVKYEAYRTLAILGCLNKHVIRALIKQLKEKNEGQRMETLTGLRMALNSWAAVSKDKRTQVGDEGKLVPVLQTLIKKSSSEASLEAALCLGFLRPCSNMVQEFLLQCLCQGLKTQRMKALRMLVKVMHVHSAPVIKAILDQLCSSSVLEDRFEATQMLKTIGLEQIQAQGLEELTFNLLRRKTHNEPFLAVRQAVAQTVEELKLKPTMMNLVEAQLMNPDATARQEAVISLGVLGIRSPQVFHLLLDLLDAENHQAVKKSLQETLILCASIDPWIQNKLKNKVLSVYEAPKTNVKAEPTRFQKEPENPEELTIQDFRLAKLNPLFIAKSITKVGQKKTPAFPPCCSKPRKHRPQVIGPWQPRIKKQLRVLAEIAK</sequence>
<organism>
    <name type="scientific">Homo sapiens</name>
    <name type="common">Human</name>
    <dbReference type="NCBI Taxonomy" id="9606"/>
    <lineage>
        <taxon>Eukaryota</taxon>
        <taxon>Metazoa</taxon>
        <taxon>Chordata</taxon>
        <taxon>Craniata</taxon>
        <taxon>Vertebrata</taxon>
        <taxon>Euteleostomi</taxon>
        <taxon>Mammalia</taxon>
        <taxon>Eutheria</taxon>
        <taxon>Euarchontoglires</taxon>
        <taxon>Primates</taxon>
        <taxon>Haplorrhini</taxon>
        <taxon>Catarrhini</taxon>
        <taxon>Hominidae</taxon>
        <taxon>Homo</taxon>
    </lineage>
</organism>
<name>HEAT9_HUMAN</name>
<gene>
    <name type="primary">HEATR9</name>
    <name type="synonym">C17orf66</name>
</gene>
<dbReference type="EMBL" id="AK057392">
    <property type="protein sequence ID" value="BAB71466.1"/>
    <property type="molecule type" value="mRNA"/>
</dbReference>
<dbReference type="EMBL" id="AK301774">
    <property type="protein sequence ID" value="BAG63233.1"/>
    <property type="molecule type" value="mRNA"/>
</dbReference>
<dbReference type="EMBL" id="AK301884">
    <property type="protein sequence ID" value="BAG63316.1"/>
    <property type="molecule type" value="mRNA"/>
</dbReference>
<dbReference type="EMBL" id="AK301943">
    <property type="protein sequence ID" value="BAG63362.1"/>
    <property type="molecule type" value="mRNA"/>
</dbReference>
<dbReference type="EMBL" id="AC015849">
    <property type="status" value="NOT_ANNOTATED_CDS"/>
    <property type="molecule type" value="Genomic_DNA"/>
</dbReference>
<dbReference type="EMBL" id="BC033734">
    <property type="protein sequence ID" value="AAH33734.1"/>
    <property type="molecule type" value="mRNA"/>
</dbReference>
<dbReference type="EMBL" id="BC132681">
    <property type="protein sequence ID" value="AAI32682.1"/>
    <property type="molecule type" value="mRNA"/>
</dbReference>
<dbReference type="CCDS" id="CCDS11299.1">
    <molecule id="A2RTY3-1"/>
</dbReference>
<dbReference type="CCDS" id="CCDS82108.1">
    <molecule id="A2RTY3-3"/>
</dbReference>
<dbReference type="RefSeq" id="NP_001308324.1">
    <molecule id="A2RTY3-3"/>
    <property type="nucleotide sequence ID" value="NM_001321395.2"/>
</dbReference>
<dbReference type="RefSeq" id="NP_689994.2">
    <molecule id="A2RTY3-1"/>
    <property type="nucleotide sequence ID" value="NM_152781.4"/>
</dbReference>
<dbReference type="SMR" id="A2RTY3"/>
<dbReference type="BioGRID" id="129186">
    <property type="interactions" value="3"/>
</dbReference>
<dbReference type="IntAct" id="A2RTY3">
    <property type="interactions" value="2"/>
</dbReference>
<dbReference type="STRING" id="9606.ENSP00000473941"/>
<dbReference type="GlyGen" id="A2RTY3">
    <property type="glycosylation" value="2 sites, 1 O-linked glycan (2 sites)"/>
</dbReference>
<dbReference type="iPTMnet" id="A2RTY3"/>
<dbReference type="PhosphoSitePlus" id="A2RTY3"/>
<dbReference type="BioMuta" id="HEATR9"/>
<dbReference type="MassIVE" id="A2RTY3"/>
<dbReference type="PaxDb" id="9606-ENSP00000473941"/>
<dbReference type="PeptideAtlas" id="A2RTY3"/>
<dbReference type="ProteomicsDB" id="485">
    <molecule id="A2RTY3-1"/>
</dbReference>
<dbReference type="ProteomicsDB" id="487">
    <molecule id="A2RTY3-3"/>
</dbReference>
<dbReference type="Antibodypedia" id="73233">
    <property type="antibodies" value="93 antibodies from 15 providers"/>
</dbReference>
<dbReference type="DNASU" id="256957"/>
<dbReference type="Ensembl" id="ENST00000603852.5">
    <molecule id="A2RTY3-4"/>
    <property type="protein sequence ID" value="ENSP00000474899.1"/>
    <property type="gene ID" value="ENSG00000270379.6"/>
</dbReference>
<dbReference type="Ensembl" id="ENST00000603870.5">
    <molecule id="A2RTY3-3"/>
    <property type="protein sequence ID" value="ENSP00000473760.1"/>
    <property type="gene ID" value="ENSG00000270379.6"/>
</dbReference>
<dbReference type="Ensembl" id="ENST00000604834.6">
    <molecule id="A2RTY3-1"/>
    <property type="protein sequence ID" value="ENSP00000473941.1"/>
    <property type="gene ID" value="ENSG00000270379.6"/>
</dbReference>
<dbReference type="Ensembl" id="ENST00000605080.5">
    <molecule id="A2RTY3-5"/>
    <property type="protein sequence ID" value="ENSP00000474893.1"/>
    <property type="gene ID" value="ENSG00000270379.6"/>
</dbReference>
<dbReference type="Ensembl" id="ENST00000614305.2">
    <molecule id="A2RTY3-1"/>
    <property type="protein sequence ID" value="ENSP00000479676.1"/>
    <property type="gene ID" value="ENSG00000276986.2"/>
</dbReference>
<dbReference type="Ensembl" id="ENST00000632179.1">
    <molecule id="A2RTY3-5"/>
    <property type="protein sequence ID" value="ENSP00000488053.1"/>
    <property type="gene ID" value="ENSG00000276986.2"/>
</dbReference>
<dbReference type="Ensembl" id="ENST00000632969.1">
    <molecule id="A2RTY3-3"/>
    <property type="protein sequence ID" value="ENSP00000488224.1"/>
    <property type="gene ID" value="ENSG00000276986.2"/>
</dbReference>
<dbReference type="Ensembl" id="ENST00000633642.1">
    <molecule id="A2RTY3-4"/>
    <property type="protein sequence ID" value="ENSP00000487778.1"/>
    <property type="gene ID" value="ENSG00000276986.2"/>
</dbReference>
<dbReference type="GeneID" id="256957"/>
<dbReference type="KEGG" id="hsa:256957"/>
<dbReference type="MANE-Select" id="ENST00000604834.6">
    <property type="protein sequence ID" value="ENSP00000473941.1"/>
    <property type="RefSeq nucleotide sequence ID" value="NM_152781.4"/>
    <property type="RefSeq protein sequence ID" value="NP_689994.2"/>
</dbReference>
<dbReference type="UCSC" id="uc002hke.2">
    <molecule id="A2RTY3-1"/>
    <property type="organism name" value="human"/>
</dbReference>
<dbReference type="AGR" id="HGNC:26548"/>
<dbReference type="CTD" id="256957"/>
<dbReference type="DisGeNET" id="256957"/>
<dbReference type="GeneCards" id="HEATR9"/>
<dbReference type="HGNC" id="HGNC:26548">
    <property type="gene designation" value="HEATR9"/>
</dbReference>
<dbReference type="HPA" id="ENSG00000270379">
    <property type="expression patterns" value="Tissue enriched (testis)"/>
</dbReference>
<dbReference type="neXtProt" id="NX_A2RTY3"/>
<dbReference type="OpenTargets" id="ENSG00000270379"/>
<dbReference type="PharmGKB" id="PA142672249"/>
<dbReference type="VEuPathDB" id="HostDB:ENSG00000270379"/>
<dbReference type="eggNOG" id="ENOG502S0KU">
    <property type="taxonomic scope" value="Eukaryota"/>
</dbReference>
<dbReference type="GeneTree" id="ENSGT00390000007247"/>
<dbReference type="HOGENOM" id="CLU_042745_1_0_1"/>
<dbReference type="InParanoid" id="A2RTY3"/>
<dbReference type="OMA" id="MEALWQV"/>
<dbReference type="OrthoDB" id="10031548at2759"/>
<dbReference type="PAN-GO" id="A2RTY3">
    <property type="GO annotations" value="0 GO annotations based on evolutionary models"/>
</dbReference>
<dbReference type="PhylomeDB" id="A2RTY3"/>
<dbReference type="TreeFam" id="TF338240"/>
<dbReference type="PathwayCommons" id="A2RTY3"/>
<dbReference type="SignaLink" id="A2RTY3"/>
<dbReference type="BioGRID-ORCS" id="256957">
    <property type="hits" value="12 hits in 1137 CRISPR screens"/>
</dbReference>
<dbReference type="ChiTaRS" id="HEATR9">
    <property type="organism name" value="human"/>
</dbReference>
<dbReference type="GenomeRNAi" id="256957"/>
<dbReference type="Pharos" id="A2RTY3">
    <property type="development level" value="Tdark"/>
</dbReference>
<dbReference type="PRO" id="PR:A2RTY3"/>
<dbReference type="Proteomes" id="UP000005640">
    <property type="component" value="Chromosome 17"/>
</dbReference>
<dbReference type="RNAct" id="A2RTY3">
    <property type="molecule type" value="protein"/>
</dbReference>
<dbReference type="Bgee" id="ENSG00000270379">
    <property type="expression patterns" value="Expressed in left testis and 78 other cell types or tissues"/>
</dbReference>
<dbReference type="ExpressionAtlas" id="A2RTY3">
    <property type="expression patterns" value="baseline and differential"/>
</dbReference>
<dbReference type="GO" id="GO:0002244">
    <property type="term" value="P:hematopoietic progenitor cell differentiation"/>
    <property type="evidence" value="ECO:0007669"/>
    <property type="project" value="Ensembl"/>
</dbReference>
<dbReference type="GO" id="GO:0034097">
    <property type="term" value="P:response to cytokine"/>
    <property type="evidence" value="ECO:0007669"/>
    <property type="project" value="Ensembl"/>
</dbReference>
<dbReference type="GO" id="GO:0009615">
    <property type="term" value="P:response to virus"/>
    <property type="evidence" value="ECO:0007669"/>
    <property type="project" value="Ensembl"/>
</dbReference>
<dbReference type="Gene3D" id="1.25.10.10">
    <property type="entry name" value="Leucine-rich Repeat Variant"/>
    <property type="match status" value="2"/>
</dbReference>
<dbReference type="InterPro" id="IPR011989">
    <property type="entry name" value="ARM-like"/>
</dbReference>
<dbReference type="InterPro" id="IPR016024">
    <property type="entry name" value="ARM-type_fold"/>
</dbReference>
<dbReference type="InterPro" id="IPR052873">
    <property type="entry name" value="HEATR9"/>
</dbReference>
<dbReference type="PANTHER" id="PTHR38323">
    <property type="entry name" value="PROTEIN HEATR9"/>
    <property type="match status" value="1"/>
</dbReference>
<dbReference type="PANTHER" id="PTHR38323:SF1">
    <property type="entry name" value="PROTEIN HEATR9"/>
    <property type="match status" value="1"/>
</dbReference>
<dbReference type="SUPFAM" id="SSF48371">
    <property type="entry name" value="ARM repeat"/>
    <property type="match status" value="1"/>
</dbReference>
<reference key="1">
    <citation type="journal article" date="2004" name="Nat. Genet.">
        <title>Complete sequencing and characterization of 21,243 full-length human cDNAs.</title>
        <authorList>
            <person name="Ota T."/>
            <person name="Suzuki Y."/>
            <person name="Nishikawa T."/>
            <person name="Otsuki T."/>
            <person name="Sugiyama T."/>
            <person name="Irie R."/>
            <person name="Wakamatsu A."/>
            <person name="Hayashi K."/>
            <person name="Sato H."/>
            <person name="Nagai K."/>
            <person name="Kimura K."/>
            <person name="Makita H."/>
            <person name="Sekine M."/>
            <person name="Obayashi M."/>
            <person name="Nishi T."/>
            <person name="Shibahara T."/>
            <person name="Tanaka T."/>
            <person name="Ishii S."/>
            <person name="Yamamoto J."/>
            <person name="Saito K."/>
            <person name="Kawai Y."/>
            <person name="Isono Y."/>
            <person name="Nakamura Y."/>
            <person name="Nagahari K."/>
            <person name="Murakami K."/>
            <person name="Yasuda T."/>
            <person name="Iwayanagi T."/>
            <person name="Wagatsuma M."/>
            <person name="Shiratori A."/>
            <person name="Sudo H."/>
            <person name="Hosoiri T."/>
            <person name="Kaku Y."/>
            <person name="Kodaira H."/>
            <person name="Kondo H."/>
            <person name="Sugawara M."/>
            <person name="Takahashi M."/>
            <person name="Kanda K."/>
            <person name="Yokoi T."/>
            <person name="Furuya T."/>
            <person name="Kikkawa E."/>
            <person name="Omura Y."/>
            <person name="Abe K."/>
            <person name="Kamihara K."/>
            <person name="Katsuta N."/>
            <person name="Sato K."/>
            <person name="Tanikawa M."/>
            <person name="Yamazaki M."/>
            <person name="Ninomiya K."/>
            <person name="Ishibashi T."/>
            <person name="Yamashita H."/>
            <person name="Murakawa K."/>
            <person name="Fujimori K."/>
            <person name="Tanai H."/>
            <person name="Kimata M."/>
            <person name="Watanabe M."/>
            <person name="Hiraoka S."/>
            <person name="Chiba Y."/>
            <person name="Ishida S."/>
            <person name="Ono Y."/>
            <person name="Takiguchi S."/>
            <person name="Watanabe S."/>
            <person name="Yosida M."/>
            <person name="Hotuta T."/>
            <person name="Kusano J."/>
            <person name="Kanehori K."/>
            <person name="Takahashi-Fujii A."/>
            <person name="Hara H."/>
            <person name="Tanase T.-O."/>
            <person name="Nomura Y."/>
            <person name="Togiya S."/>
            <person name="Komai F."/>
            <person name="Hara R."/>
            <person name="Takeuchi K."/>
            <person name="Arita M."/>
            <person name="Imose N."/>
            <person name="Musashino K."/>
            <person name="Yuuki H."/>
            <person name="Oshima A."/>
            <person name="Sasaki N."/>
            <person name="Aotsuka S."/>
            <person name="Yoshikawa Y."/>
            <person name="Matsunawa H."/>
            <person name="Ichihara T."/>
            <person name="Shiohata N."/>
            <person name="Sano S."/>
            <person name="Moriya S."/>
            <person name="Momiyama H."/>
            <person name="Satoh N."/>
            <person name="Takami S."/>
            <person name="Terashima Y."/>
            <person name="Suzuki O."/>
            <person name="Nakagawa S."/>
            <person name="Senoh A."/>
            <person name="Mizoguchi H."/>
            <person name="Goto Y."/>
            <person name="Shimizu F."/>
            <person name="Wakebe H."/>
            <person name="Hishigaki H."/>
            <person name="Watanabe T."/>
            <person name="Sugiyama A."/>
            <person name="Takemoto M."/>
            <person name="Kawakami B."/>
            <person name="Yamazaki M."/>
            <person name="Watanabe K."/>
            <person name="Kumagai A."/>
            <person name="Itakura S."/>
            <person name="Fukuzumi Y."/>
            <person name="Fujimori Y."/>
            <person name="Komiyama M."/>
            <person name="Tashiro H."/>
            <person name="Tanigami A."/>
            <person name="Fujiwara T."/>
            <person name="Ono T."/>
            <person name="Yamada K."/>
            <person name="Fujii Y."/>
            <person name="Ozaki K."/>
            <person name="Hirao M."/>
            <person name="Ohmori Y."/>
            <person name="Kawabata A."/>
            <person name="Hikiji T."/>
            <person name="Kobatake N."/>
            <person name="Inagaki H."/>
            <person name="Ikema Y."/>
            <person name="Okamoto S."/>
            <person name="Okitani R."/>
            <person name="Kawakami T."/>
            <person name="Noguchi S."/>
            <person name="Itoh T."/>
            <person name="Shigeta K."/>
            <person name="Senba T."/>
            <person name="Matsumura K."/>
            <person name="Nakajima Y."/>
            <person name="Mizuno T."/>
            <person name="Morinaga M."/>
            <person name="Sasaki M."/>
            <person name="Togashi T."/>
            <person name="Oyama M."/>
            <person name="Hata H."/>
            <person name="Watanabe M."/>
            <person name="Komatsu T."/>
            <person name="Mizushima-Sugano J."/>
            <person name="Satoh T."/>
            <person name="Shirai Y."/>
            <person name="Takahashi Y."/>
            <person name="Nakagawa K."/>
            <person name="Okumura K."/>
            <person name="Nagase T."/>
            <person name="Nomura N."/>
            <person name="Kikuchi H."/>
            <person name="Masuho Y."/>
            <person name="Yamashita R."/>
            <person name="Nakai K."/>
            <person name="Yada T."/>
            <person name="Nakamura Y."/>
            <person name="Ohara O."/>
            <person name="Isogai T."/>
            <person name="Sugano S."/>
        </authorList>
    </citation>
    <scope>NUCLEOTIDE SEQUENCE [LARGE SCALE MRNA] (ISOFORMS 1; 3; 4 AND 5)</scope>
    <scope>VARIANT PHE-480</scope>
    <source>
        <tissue>Testis</tissue>
    </source>
</reference>
<reference key="2">
    <citation type="journal article" date="2006" name="Nature">
        <title>DNA sequence of human chromosome 17 and analysis of rearrangement in the human lineage.</title>
        <authorList>
            <person name="Zody M.C."/>
            <person name="Garber M."/>
            <person name="Adams D.J."/>
            <person name="Sharpe T."/>
            <person name="Harrow J."/>
            <person name="Lupski J.R."/>
            <person name="Nicholson C."/>
            <person name="Searle S.M."/>
            <person name="Wilming L."/>
            <person name="Young S.K."/>
            <person name="Abouelleil A."/>
            <person name="Allen N.R."/>
            <person name="Bi W."/>
            <person name="Bloom T."/>
            <person name="Borowsky M.L."/>
            <person name="Bugalter B.E."/>
            <person name="Butler J."/>
            <person name="Chang J.L."/>
            <person name="Chen C.-K."/>
            <person name="Cook A."/>
            <person name="Corum B."/>
            <person name="Cuomo C.A."/>
            <person name="de Jong P.J."/>
            <person name="DeCaprio D."/>
            <person name="Dewar K."/>
            <person name="FitzGerald M."/>
            <person name="Gilbert J."/>
            <person name="Gibson R."/>
            <person name="Gnerre S."/>
            <person name="Goldstein S."/>
            <person name="Grafham D.V."/>
            <person name="Grocock R."/>
            <person name="Hafez N."/>
            <person name="Hagopian D.S."/>
            <person name="Hart E."/>
            <person name="Norman C.H."/>
            <person name="Humphray S."/>
            <person name="Jaffe D.B."/>
            <person name="Jones M."/>
            <person name="Kamal M."/>
            <person name="Khodiyar V.K."/>
            <person name="LaButti K."/>
            <person name="Laird G."/>
            <person name="Lehoczky J."/>
            <person name="Liu X."/>
            <person name="Lokyitsang T."/>
            <person name="Loveland J."/>
            <person name="Lui A."/>
            <person name="Macdonald P."/>
            <person name="Major J.E."/>
            <person name="Matthews L."/>
            <person name="Mauceli E."/>
            <person name="McCarroll S.A."/>
            <person name="Mihalev A.H."/>
            <person name="Mudge J."/>
            <person name="Nguyen C."/>
            <person name="Nicol R."/>
            <person name="O'Leary S.B."/>
            <person name="Osoegawa K."/>
            <person name="Schwartz D.C."/>
            <person name="Shaw-Smith C."/>
            <person name="Stankiewicz P."/>
            <person name="Steward C."/>
            <person name="Swarbreck D."/>
            <person name="Venkataraman V."/>
            <person name="Whittaker C.A."/>
            <person name="Yang X."/>
            <person name="Zimmer A.R."/>
            <person name="Bradley A."/>
            <person name="Hubbard T."/>
            <person name="Birren B.W."/>
            <person name="Rogers J."/>
            <person name="Lander E.S."/>
            <person name="Nusbaum C."/>
        </authorList>
    </citation>
    <scope>NUCLEOTIDE SEQUENCE [LARGE SCALE GENOMIC DNA]</scope>
</reference>
<reference key="3">
    <citation type="journal article" date="2004" name="Genome Res.">
        <title>The status, quality, and expansion of the NIH full-length cDNA project: the Mammalian Gene Collection (MGC).</title>
        <authorList>
            <consortium name="The MGC Project Team"/>
        </authorList>
    </citation>
    <scope>NUCLEOTIDE SEQUENCE [LARGE SCALE MRNA] (ISOFORMS 1 AND 2)</scope>
    <source>
        <tissue>Brain</tissue>
        <tissue>Testis</tissue>
    </source>
</reference>
<reference key="4">
    <citation type="journal article" date="2006" name="Science">
        <title>The consensus coding sequences of human breast and colorectal cancers.</title>
        <authorList>
            <person name="Sjoeblom T."/>
            <person name="Jones S."/>
            <person name="Wood L.D."/>
            <person name="Parsons D.W."/>
            <person name="Lin J."/>
            <person name="Barber T.D."/>
            <person name="Mandelker D."/>
            <person name="Leary R.J."/>
            <person name="Ptak J."/>
            <person name="Silliman N."/>
            <person name="Szabo S."/>
            <person name="Buckhaults P."/>
            <person name="Farrell C."/>
            <person name="Meeh P."/>
            <person name="Markowitz S.D."/>
            <person name="Willis J."/>
            <person name="Dawson D."/>
            <person name="Willson J.K.V."/>
            <person name="Gazdar A.F."/>
            <person name="Hartigan J."/>
            <person name="Wu L."/>
            <person name="Liu C."/>
            <person name="Parmigiani G."/>
            <person name="Park B.H."/>
            <person name="Bachman K.E."/>
            <person name="Papadopoulos N."/>
            <person name="Vogelstein B."/>
            <person name="Kinzler K.W."/>
            <person name="Velculescu V.E."/>
        </authorList>
    </citation>
    <scope>VARIANT [LARGE SCALE ANALYSIS] MET-330</scope>
</reference>
<accession>A2RTY3</accession>
<accession>B4DX21</accession>
<accession>B4DXA4</accession>
<accession>B4DXF0</accession>
<accession>Q8N4R4</accession>
<accession>Q96M46</accession>